<protein>
    <recommendedName>
        <fullName evidence="5">Protein OrfX1</fullName>
    </recommendedName>
</protein>
<dbReference type="EMBL" id="CP001581">
    <property type="protein sequence ID" value="ACO84115.1"/>
    <property type="molecule type" value="Genomic_DNA"/>
</dbReference>
<dbReference type="RefSeq" id="WP_012704051.1">
    <property type="nucleotide sequence ID" value="NC_012563.1"/>
</dbReference>
<dbReference type="SMR" id="C1FUH5"/>
<dbReference type="KEGG" id="cby:CLM_0893"/>
<dbReference type="eggNOG" id="ENOG503276X">
    <property type="taxonomic scope" value="Bacteria"/>
</dbReference>
<dbReference type="HOGENOM" id="CLU_1812382_0_0_9"/>
<dbReference type="Proteomes" id="UP000001374">
    <property type="component" value="Chromosome"/>
</dbReference>
<dbReference type="GO" id="GO:0008289">
    <property type="term" value="F:lipid binding"/>
    <property type="evidence" value="ECO:0007669"/>
    <property type="project" value="UniProtKB-KW"/>
</dbReference>
<evidence type="ECO:0000250" key="1">
    <source>
        <dbReference type="UniProtKB" id="A0A5P3XKM0"/>
    </source>
</evidence>
<evidence type="ECO:0000269" key="2">
    <source>
    </source>
</evidence>
<evidence type="ECO:0000269" key="3">
    <source>
    </source>
</evidence>
<evidence type="ECO:0000269" key="4">
    <source>
    </source>
</evidence>
<evidence type="ECO:0000303" key="5">
    <source>
    </source>
</evidence>
<evidence type="ECO:0000305" key="6">
    <source>
    </source>
</evidence>
<evidence type="ECO:0000312" key="7">
    <source>
        <dbReference type="EMBL" id="ACO84115.1"/>
    </source>
</evidence>
<comment type="function">
    <text evidence="4 6">Part of a botulinum neurotoxin type A2 (BoNT) locus; may be part of a progenitor toxin complex required to protect BoNT during its passage through the host gastrointestinal tract (Probable). Binds phosphatidylinositol (3,4) bisphosphate, phosphatidylethanolamine and phosphatidylserine (PubMed:29067689).</text>
</comment>
<comment type="subunit">
    <text evidence="3">OrfX1 was not detected as part of a crude toxin extract that includes BoNTA2/NTNH, P47, OrfX2 and OrfX3.</text>
</comment>
<comment type="induction">
    <text evidence="2">The toxin locus has divergently transcribed operons maximally expressed during early stationary phase. This is part of the orfX1-orfX2-orfX3 operon. A longer botR-orfX1-orfX2-orfX3 operon is also transcribed at lower levels.</text>
</comment>
<comment type="similarity">
    <text evidence="1">Belongs to the TULIP P47 family.</text>
</comment>
<name>ORFX1_CLOBJ</name>
<proteinExistence type="evidence at protein level"/>
<organism>
    <name type="scientific">Clostridium botulinum (strain Kyoto / Type A2)</name>
    <dbReference type="NCBI Taxonomy" id="536232"/>
    <lineage>
        <taxon>Bacteria</taxon>
        <taxon>Bacillati</taxon>
        <taxon>Bacillota</taxon>
        <taxon>Clostridia</taxon>
        <taxon>Eubacteriales</taxon>
        <taxon>Clostridiaceae</taxon>
        <taxon>Clostridium</taxon>
    </lineage>
</organism>
<reference evidence="7" key="1">
    <citation type="submission" date="2008-10" db="EMBL/GenBank/DDBJ databases">
        <title>Genome sequence of Clostridium botulinum A2 Kyoto.</title>
        <authorList>
            <person name="Shrivastava S."/>
            <person name="Brinkac L.M."/>
            <person name="Brown J.L."/>
            <person name="Bruce D."/>
            <person name="Detter C.C."/>
            <person name="Johnson E.A."/>
            <person name="Munk C.A."/>
            <person name="Smith L.A."/>
            <person name="Smith T.J."/>
            <person name="Sutton G."/>
            <person name="Brettin T.S."/>
        </authorList>
    </citation>
    <scope>NUCLEOTIDE SEQUENCE [LARGE SCALE GENOMIC DNA]</scope>
    <source>
        <strain>Kyoto / Type A2</strain>
    </source>
</reference>
<reference key="2">
    <citation type="journal article" date="2004" name="FEMS Microbiol. Lett.">
        <title>Nucleotide sequence and transcriptional analysis of the type A2 neurotoxin gene cluster in Clostridium botulinum.</title>
        <authorList>
            <person name="Dineen S.S."/>
            <person name="Bradshaw M."/>
            <person name="Karasek C.E."/>
            <person name="Johnson E.A."/>
        </authorList>
    </citation>
    <scope>INDUCTION</scope>
    <scope>OPERON STRUCTURE</scope>
    <source>
        <strain>Kyoto / Type A2</strain>
    </source>
</reference>
<reference key="3">
    <citation type="journal article" date="2010" name="Appl. Environ. Microbiol.">
        <title>Expression of the Clostridium botulinum A2 neurotoxin gene cluster proteins and characterization of the A2 complex.</title>
        <authorList>
            <person name="Lin G."/>
            <person name="Tepp W.H."/>
            <person name="Pier C.L."/>
            <person name="Jacobson M.J."/>
            <person name="Johnson E.A."/>
        </authorList>
    </citation>
    <scope>DISCUSSION OF SEQUENCE</scope>
    <source>
        <strain>Kyoto / Type A2</strain>
    </source>
</reference>
<reference key="4">
    <citation type="journal article" date="2017" name="FEBS Lett.">
        <title>Crystal structures of OrfX2 and P47 from a Botulinum neurotoxin OrfX-type gene cluster.</title>
        <authorList>
            <person name="Gustafsson R."/>
            <person name="Berntsson R.P."/>
            <person name="Martinez-Carranza M."/>
            <person name="El Tekle G."/>
            <person name="Odegrip R."/>
            <person name="Johnson E.A."/>
            <person name="Stenmark P."/>
        </authorList>
    </citation>
    <scope>POSSIBLE FUNCTION</scope>
    <scope>LIPID-BINDING</scope>
    <source>
        <strain>Kyoto / Type A2</strain>
    </source>
</reference>
<accession>C1FUH5</accession>
<gene>
    <name type="primary">orfX1</name>
    <name evidence="7" type="ordered locus">CLM_0893</name>
</gene>
<feature type="chain" id="PRO_0000457884" description="Protein OrfX1">
    <location>
        <begin position="1"/>
        <end position="142"/>
    </location>
</feature>
<sequence>MNQTFSFNFDDTLSNSSGLINLEKINQNCSPNYQYFKIKFIGGYLHIKNKSGDILEKYDLKDLISLIALKKDYLKLSSPNNKKPNEFTNIKNKHLENRFNLYVINEDINGKITKNGILEEIILNRLLLSILLGNEENLLQIA</sequence>
<keyword id="KW-0446">Lipid-binding</keyword>
<keyword id="KW-0843">Virulence</keyword>